<comment type="function">
    <text evidence="1">Involved in regulation of pyruvate dehydrogenase activity.</text>
</comment>
<comment type="catalytic activity">
    <reaction>
        <text>O-phospho-L-seryl-[protein] + H2O = L-seryl-[protein] + phosphate</text>
        <dbReference type="Rhea" id="RHEA:20629"/>
        <dbReference type="Rhea" id="RHEA-COMP:9863"/>
        <dbReference type="Rhea" id="RHEA-COMP:11604"/>
        <dbReference type="ChEBI" id="CHEBI:15377"/>
        <dbReference type="ChEBI" id="CHEBI:29999"/>
        <dbReference type="ChEBI" id="CHEBI:43474"/>
        <dbReference type="ChEBI" id="CHEBI:83421"/>
        <dbReference type="EC" id="3.1.3.16"/>
    </reaction>
</comment>
<comment type="catalytic activity">
    <reaction>
        <text>O-phospho-L-threonyl-[protein] + H2O = L-threonyl-[protein] + phosphate</text>
        <dbReference type="Rhea" id="RHEA:47004"/>
        <dbReference type="Rhea" id="RHEA-COMP:11060"/>
        <dbReference type="Rhea" id="RHEA-COMP:11605"/>
        <dbReference type="ChEBI" id="CHEBI:15377"/>
        <dbReference type="ChEBI" id="CHEBI:30013"/>
        <dbReference type="ChEBI" id="CHEBI:43474"/>
        <dbReference type="ChEBI" id="CHEBI:61977"/>
        <dbReference type="EC" id="3.1.3.16"/>
    </reaction>
</comment>
<comment type="cofactor">
    <cofactor evidence="1">
        <name>Mg(2+)</name>
        <dbReference type="ChEBI" id="CHEBI:18420"/>
    </cofactor>
    <cofactor evidence="1">
        <name>Mn(2+)</name>
        <dbReference type="ChEBI" id="CHEBI:29035"/>
    </cofactor>
    <text evidence="1">Binds 2 magnesium or manganese ions per subunit.</text>
</comment>
<comment type="subcellular location">
    <subcellularLocation>
        <location evidence="3">Mitochondrion</location>
    </subcellularLocation>
</comment>
<comment type="similarity">
    <text evidence="4">Belongs to the PP2C family.</text>
</comment>
<name>PP2C5_SCHPO</name>
<gene>
    <name type="ORF">SPAC10F6.17c</name>
</gene>
<sequence>MNFFTSAVGSKVFKRNNFKYVAIAASSIGLAAYHIRKDAIALDIPNSTYQHVSKNRVPPTDGDGITKRLKEFERTVTVNKDGIFRYDFNQVASNDPCEDDHVEVIDRNIDEGNWYFWGIFDGHSGWNTSLFLRQHLVPAVVRELQKCTASYYHQNACPSSLALDKSISEAFAKVDHQIVHEHVSHVFNNPESLQVAASLLLPALSGSCALLTSYSAKSKSLQVACTGDSRAVLGECTPDGSWEAIPLSRDQTGMNPDEASRLEVEHPGEEVLRNNRILGRLMPSRAFGDARYKWSQEISERLHREYFSASPIPVKTPPYVTAVPEIESITVNPKKHRFLIMASDGLWDTMSSEQAVQLVGEWADTVLGKTTNEKNTTQDDKQSWSLFKKTSKVIDDNAATHLIRHSLGGSDQRISALLTLTYPISRRYRDDITVTVIFFDEKTL</sequence>
<feature type="chain" id="PRO_0000352809" description="Protein phosphatase 2C homolog C10F6.17c">
    <location>
        <begin position="1"/>
        <end position="444"/>
    </location>
</feature>
<feature type="domain" description="PPM-type phosphatase" evidence="2">
    <location>
        <begin position="85"/>
        <end position="439"/>
    </location>
</feature>
<feature type="binding site" evidence="1">
    <location>
        <position position="121"/>
    </location>
    <ligand>
        <name>Mn(2+)</name>
        <dbReference type="ChEBI" id="CHEBI:29035"/>
        <label>1</label>
    </ligand>
</feature>
<feature type="binding site" evidence="1">
    <location>
        <position position="121"/>
    </location>
    <ligand>
        <name>Mn(2+)</name>
        <dbReference type="ChEBI" id="CHEBI:29035"/>
        <label>2</label>
    </ligand>
</feature>
<feature type="binding site" evidence="1">
    <location>
        <position position="122"/>
    </location>
    <ligand>
        <name>Mn(2+)</name>
        <dbReference type="ChEBI" id="CHEBI:29035"/>
        <label>1</label>
    </ligand>
</feature>
<feature type="binding site" evidence="1">
    <location>
        <position position="344"/>
    </location>
    <ligand>
        <name>Mn(2+)</name>
        <dbReference type="ChEBI" id="CHEBI:29035"/>
        <label>2</label>
    </ligand>
</feature>
<accession>O14189</accession>
<accession>O42655</accession>
<evidence type="ECO:0000250" key="1"/>
<evidence type="ECO:0000255" key="2">
    <source>
        <dbReference type="PROSITE-ProRule" id="PRU01082"/>
    </source>
</evidence>
<evidence type="ECO:0000269" key="3">
    <source>
    </source>
</evidence>
<evidence type="ECO:0000305" key="4"/>
<protein>
    <recommendedName>
        <fullName>Protein phosphatase 2C homolog C10F6.17c</fullName>
        <ecNumber>3.1.3.16</ecNumber>
    </recommendedName>
    <alternativeName>
        <fullName>Pyruvate dehydrogenase (Lipoamide) phosphatase C10F6.17c</fullName>
    </alternativeName>
</protein>
<proteinExistence type="inferred from homology"/>
<keyword id="KW-0378">Hydrolase</keyword>
<keyword id="KW-0460">Magnesium</keyword>
<keyword id="KW-0464">Manganese</keyword>
<keyword id="KW-0479">Metal-binding</keyword>
<keyword id="KW-0496">Mitochondrion</keyword>
<keyword id="KW-0904">Protein phosphatase</keyword>
<keyword id="KW-1185">Reference proteome</keyword>
<reference key="1">
    <citation type="journal article" date="2002" name="Nature">
        <title>The genome sequence of Schizosaccharomyces pombe.</title>
        <authorList>
            <person name="Wood V."/>
            <person name="Gwilliam R."/>
            <person name="Rajandream M.A."/>
            <person name="Lyne M.H."/>
            <person name="Lyne R."/>
            <person name="Stewart A."/>
            <person name="Sgouros J.G."/>
            <person name="Peat N."/>
            <person name="Hayles J."/>
            <person name="Baker S.G."/>
            <person name="Basham D."/>
            <person name="Bowman S."/>
            <person name="Brooks K."/>
            <person name="Brown D."/>
            <person name="Brown S."/>
            <person name="Chillingworth T."/>
            <person name="Churcher C.M."/>
            <person name="Collins M."/>
            <person name="Connor R."/>
            <person name="Cronin A."/>
            <person name="Davis P."/>
            <person name="Feltwell T."/>
            <person name="Fraser A."/>
            <person name="Gentles S."/>
            <person name="Goble A."/>
            <person name="Hamlin N."/>
            <person name="Harris D.E."/>
            <person name="Hidalgo J."/>
            <person name="Hodgson G."/>
            <person name="Holroyd S."/>
            <person name="Hornsby T."/>
            <person name="Howarth S."/>
            <person name="Huckle E.J."/>
            <person name="Hunt S."/>
            <person name="Jagels K."/>
            <person name="James K.D."/>
            <person name="Jones L."/>
            <person name="Jones M."/>
            <person name="Leather S."/>
            <person name="McDonald S."/>
            <person name="McLean J."/>
            <person name="Mooney P."/>
            <person name="Moule S."/>
            <person name="Mungall K.L."/>
            <person name="Murphy L.D."/>
            <person name="Niblett D."/>
            <person name="Odell C."/>
            <person name="Oliver K."/>
            <person name="O'Neil S."/>
            <person name="Pearson D."/>
            <person name="Quail M.A."/>
            <person name="Rabbinowitsch E."/>
            <person name="Rutherford K.M."/>
            <person name="Rutter S."/>
            <person name="Saunders D."/>
            <person name="Seeger K."/>
            <person name="Sharp S."/>
            <person name="Skelton J."/>
            <person name="Simmonds M.N."/>
            <person name="Squares R."/>
            <person name="Squares S."/>
            <person name="Stevens K."/>
            <person name="Taylor K."/>
            <person name="Taylor R.G."/>
            <person name="Tivey A."/>
            <person name="Walsh S.V."/>
            <person name="Warren T."/>
            <person name="Whitehead S."/>
            <person name="Woodward J.R."/>
            <person name="Volckaert G."/>
            <person name="Aert R."/>
            <person name="Robben J."/>
            <person name="Grymonprez B."/>
            <person name="Weltjens I."/>
            <person name="Vanstreels E."/>
            <person name="Rieger M."/>
            <person name="Schaefer M."/>
            <person name="Mueller-Auer S."/>
            <person name="Gabel C."/>
            <person name="Fuchs M."/>
            <person name="Duesterhoeft A."/>
            <person name="Fritzc C."/>
            <person name="Holzer E."/>
            <person name="Moestl D."/>
            <person name="Hilbert H."/>
            <person name="Borzym K."/>
            <person name="Langer I."/>
            <person name="Beck A."/>
            <person name="Lehrach H."/>
            <person name="Reinhardt R."/>
            <person name="Pohl T.M."/>
            <person name="Eger P."/>
            <person name="Zimmermann W."/>
            <person name="Wedler H."/>
            <person name="Wambutt R."/>
            <person name="Purnelle B."/>
            <person name="Goffeau A."/>
            <person name="Cadieu E."/>
            <person name="Dreano S."/>
            <person name="Gloux S."/>
            <person name="Lelaure V."/>
            <person name="Mottier S."/>
            <person name="Galibert F."/>
            <person name="Aves S.J."/>
            <person name="Xiang Z."/>
            <person name="Hunt C."/>
            <person name="Moore K."/>
            <person name="Hurst S.M."/>
            <person name="Lucas M."/>
            <person name="Rochet M."/>
            <person name="Gaillardin C."/>
            <person name="Tallada V.A."/>
            <person name="Garzon A."/>
            <person name="Thode G."/>
            <person name="Daga R.R."/>
            <person name="Cruzado L."/>
            <person name="Jimenez J."/>
            <person name="Sanchez M."/>
            <person name="del Rey F."/>
            <person name="Benito J."/>
            <person name="Dominguez A."/>
            <person name="Revuelta J.L."/>
            <person name="Moreno S."/>
            <person name="Armstrong J."/>
            <person name="Forsburg S.L."/>
            <person name="Cerutti L."/>
            <person name="Lowe T."/>
            <person name="McCombie W.R."/>
            <person name="Paulsen I."/>
            <person name="Potashkin J."/>
            <person name="Shpakovski G.V."/>
            <person name="Ussery D."/>
            <person name="Barrell B.G."/>
            <person name="Nurse P."/>
        </authorList>
    </citation>
    <scope>NUCLEOTIDE SEQUENCE [LARGE SCALE GENOMIC DNA]</scope>
    <source>
        <strain>972 / ATCC 24843</strain>
    </source>
</reference>
<reference key="2">
    <citation type="journal article" date="2006" name="Nat. Biotechnol.">
        <title>ORFeome cloning and global analysis of protein localization in the fission yeast Schizosaccharomyces pombe.</title>
        <authorList>
            <person name="Matsuyama A."/>
            <person name="Arai R."/>
            <person name="Yashiroda Y."/>
            <person name="Shirai A."/>
            <person name="Kamata A."/>
            <person name="Sekido S."/>
            <person name="Kobayashi Y."/>
            <person name="Hashimoto A."/>
            <person name="Hamamoto M."/>
            <person name="Hiraoka Y."/>
            <person name="Horinouchi S."/>
            <person name="Yoshida M."/>
        </authorList>
    </citation>
    <scope>SUBCELLULAR LOCATION [LARGE SCALE ANALYSIS]</scope>
</reference>
<dbReference type="EC" id="3.1.3.16"/>
<dbReference type="EMBL" id="CU329670">
    <property type="protein sequence ID" value="CAA15730.2"/>
    <property type="molecule type" value="Genomic_DNA"/>
</dbReference>
<dbReference type="RefSeq" id="NP_593268.2">
    <property type="nucleotide sequence ID" value="NM_001018665.2"/>
</dbReference>
<dbReference type="SMR" id="O14189"/>
<dbReference type="BioGRID" id="279440">
    <property type="interactions" value="1"/>
</dbReference>
<dbReference type="FunCoup" id="O14189">
    <property type="interactions" value="212"/>
</dbReference>
<dbReference type="STRING" id="284812.O14189"/>
<dbReference type="iPTMnet" id="O14189"/>
<dbReference type="PaxDb" id="4896-SPAC10F6.17c.1"/>
<dbReference type="EnsemblFungi" id="SPAC10F6.17c.1">
    <property type="protein sequence ID" value="SPAC10F6.17c.1:pep"/>
    <property type="gene ID" value="SPAC10F6.17c"/>
</dbReference>
<dbReference type="KEGG" id="spo:2543002"/>
<dbReference type="PomBase" id="SPAC10F6.17c"/>
<dbReference type="VEuPathDB" id="FungiDB:SPAC10F6.17c"/>
<dbReference type="eggNOG" id="KOG0700">
    <property type="taxonomic scope" value="Eukaryota"/>
</dbReference>
<dbReference type="HOGENOM" id="CLU_021928_1_0_1"/>
<dbReference type="InParanoid" id="O14189"/>
<dbReference type="OMA" id="DHNAWNP"/>
<dbReference type="PhylomeDB" id="O14189"/>
<dbReference type="PRO" id="PR:O14189"/>
<dbReference type="Proteomes" id="UP000002485">
    <property type="component" value="Chromosome I"/>
</dbReference>
<dbReference type="GO" id="GO:0005739">
    <property type="term" value="C:mitochondrion"/>
    <property type="evidence" value="ECO:0007005"/>
    <property type="project" value="PomBase"/>
</dbReference>
<dbReference type="GO" id="GO:0004741">
    <property type="term" value="F:[pyruvate dehydrogenase (acetyl-transferring)]-phosphatase activity"/>
    <property type="evidence" value="ECO:0000318"/>
    <property type="project" value="GO_Central"/>
</dbReference>
<dbReference type="GO" id="GO:0046872">
    <property type="term" value="F:metal ion binding"/>
    <property type="evidence" value="ECO:0007669"/>
    <property type="project" value="UniProtKB-KW"/>
</dbReference>
<dbReference type="GO" id="GO:0006091">
    <property type="term" value="P:generation of precursor metabolites and energy"/>
    <property type="evidence" value="ECO:0000303"/>
    <property type="project" value="PomBase"/>
</dbReference>
<dbReference type="GO" id="GO:0006086">
    <property type="term" value="P:pyruvate decarboxylation to acetyl-CoA"/>
    <property type="evidence" value="ECO:0000305"/>
    <property type="project" value="PomBase"/>
</dbReference>
<dbReference type="GO" id="GO:0007165">
    <property type="term" value="P:signal transduction"/>
    <property type="evidence" value="ECO:0000318"/>
    <property type="project" value="GO_Central"/>
</dbReference>
<dbReference type="CDD" id="cd00143">
    <property type="entry name" value="PP2Cc"/>
    <property type="match status" value="1"/>
</dbReference>
<dbReference type="Gene3D" id="3.60.40.10">
    <property type="entry name" value="PPM-type phosphatase domain"/>
    <property type="match status" value="1"/>
</dbReference>
<dbReference type="InterPro" id="IPR015655">
    <property type="entry name" value="PP2C"/>
</dbReference>
<dbReference type="InterPro" id="IPR036457">
    <property type="entry name" value="PPM-type-like_dom_sf"/>
</dbReference>
<dbReference type="InterPro" id="IPR001932">
    <property type="entry name" value="PPM-type_phosphatase-like_dom"/>
</dbReference>
<dbReference type="PANTHER" id="PTHR13832:SF792">
    <property type="entry name" value="GM14286P"/>
    <property type="match status" value="1"/>
</dbReference>
<dbReference type="PANTHER" id="PTHR13832">
    <property type="entry name" value="PROTEIN PHOSPHATASE 2C"/>
    <property type="match status" value="1"/>
</dbReference>
<dbReference type="Pfam" id="PF00481">
    <property type="entry name" value="PP2C"/>
    <property type="match status" value="1"/>
</dbReference>
<dbReference type="SMART" id="SM00332">
    <property type="entry name" value="PP2Cc"/>
    <property type="match status" value="1"/>
</dbReference>
<dbReference type="SUPFAM" id="SSF81606">
    <property type="entry name" value="PP2C-like"/>
    <property type="match status" value="1"/>
</dbReference>
<dbReference type="PROSITE" id="PS51746">
    <property type="entry name" value="PPM_2"/>
    <property type="match status" value="1"/>
</dbReference>
<organism>
    <name type="scientific">Schizosaccharomyces pombe (strain 972 / ATCC 24843)</name>
    <name type="common">Fission yeast</name>
    <dbReference type="NCBI Taxonomy" id="284812"/>
    <lineage>
        <taxon>Eukaryota</taxon>
        <taxon>Fungi</taxon>
        <taxon>Dikarya</taxon>
        <taxon>Ascomycota</taxon>
        <taxon>Taphrinomycotina</taxon>
        <taxon>Schizosaccharomycetes</taxon>
        <taxon>Schizosaccharomycetales</taxon>
        <taxon>Schizosaccharomycetaceae</taxon>
        <taxon>Schizosaccharomyces</taxon>
    </lineage>
</organism>